<keyword id="KW-0536">Nodulation</keyword>
<keyword id="KW-0808">Transferase</keyword>
<accession>Q01990</accession>
<name>NODU_RHIFR</name>
<protein>
    <recommendedName>
        <fullName>Nodulation protein U</fullName>
        <ecNumber>2.1.3.-</ecNumber>
    </recommendedName>
</protein>
<feature type="chain" id="PRO_0000207849" description="Nodulation protein U">
    <location>
        <begin position="1"/>
        <end position="581"/>
    </location>
</feature>
<organism>
    <name type="scientific">Rhizobium fredii</name>
    <name type="common">Sinorhizobium fredii</name>
    <dbReference type="NCBI Taxonomy" id="380"/>
    <lineage>
        <taxon>Bacteria</taxon>
        <taxon>Pseudomonadati</taxon>
        <taxon>Pseudomonadota</taxon>
        <taxon>Alphaproteobacteria</taxon>
        <taxon>Hyphomicrobiales</taxon>
        <taxon>Rhizobiaceae</taxon>
        <taxon>Sinorhizobium/Ensifer group</taxon>
        <taxon>Sinorhizobium</taxon>
    </lineage>
</organism>
<sequence length="581" mass="63582">MKTACFPVFRNRLPDLDRDLDRDTKRVCGIKLTHDGAIAVVEDGRLVFCTEQEKRNNNSRYQEINNLDAVVAALAENGVNARDVDQFVIDGWDGEAESRFKVLSGETPVILRGAPYVERHAEGLLDWIGGSGLTLGDRVFSYRSYPHVTSHVASAYCTSPFAKSGDPALCLVWDGCIFPQLYHVEGKRASFVKSLFPVTGQAYAAAGHYFGPYKQTSRGGWDLGVAGKLMAFVALGSVHVRIVAVFQKLYQEHFAGDTALACAFRANINNSESSLAAVHDFFAASALQLGQRRPKTCLHRLIFSSNVSSLTKWRTLQHHPLPGARNLCIAGGCGLNIKWNSALRQTGLFDSVWVPPFPNDSGSAIGAACCEIVAQQGFVPLDWSVYSGPSLQDRQVPAGWHASPCSISEVAAILASNKPVVFLSGRTELGPRALGGRSILAAATSPEMKDHLNEIKFREHFRPVAPICLEDRAPDIFSPGTPDPYMLFDHQTKMPWQDKVPAVVHLDGSARLQTISRNSQHKVAEVLVEYEKLTGIPLLCNTSANYHGRGFFPSAAAACEWGRVEHVWCDGMLYRKPSATA</sequence>
<reference key="1">
    <citation type="journal article" date="1992" name="Mol. Microbiol.">
        <title>Differential expression of nodS accounts for the varied abilities of Rhizobium fredii USDA257 and Rhizobium sp. strain NGR234 to nodulate Leucaena spp.</title>
        <authorList>
            <person name="Krishnan H.B."/>
            <person name="Lewin A."/>
            <person name="Fellay R."/>
            <person name="Broughton W.J."/>
            <person name="Pueppke S.G."/>
        </authorList>
    </citation>
    <scope>NUCLEOTIDE SEQUENCE [GENOMIC DNA]</scope>
    <source>
        <strain>USDA 257</strain>
    </source>
</reference>
<gene>
    <name type="primary">nodU</name>
</gene>
<proteinExistence type="inferred from homology"/>
<evidence type="ECO:0000305" key="1"/>
<dbReference type="EC" id="2.1.3.-"/>
<dbReference type="EMBL" id="L03520">
    <property type="protein sequence ID" value="AAA72293.1"/>
    <property type="molecule type" value="Genomic_DNA"/>
</dbReference>
<dbReference type="PIR" id="S28439">
    <property type="entry name" value="S28439"/>
</dbReference>
<dbReference type="SMR" id="Q01990"/>
<dbReference type="GO" id="GO:0016740">
    <property type="term" value="F:transferase activity"/>
    <property type="evidence" value="ECO:0007669"/>
    <property type="project" value="UniProtKB-KW"/>
</dbReference>
<dbReference type="GO" id="GO:0009058">
    <property type="term" value="P:biosynthetic process"/>
    <property type="evidence" value="ECO:0007669"/>
    <property type="project" value="InterPro"/>
</dbReference>
<dbReference type="CDD" id="cd24101">
    <property type="entry name" value="ASKHA_NBD_NodU_N"/>
    <property type="match status" value="1"/>
</dbReference>
<dbReference type="Gene3D" id="3.30.420.40">
    <property type="match status" value="2"/>
</dbReference>
<dbReference type="Gene3D" id="3.90.870.20">
    <property type="entry name" value="Carbamoyltransferase, C-terminal domain"/>
    <property type="match status" value="1"/>
</dbReference>
<dbReference type="InterPro" id="IPR031730">
    <property type="entry name" value="Carbam_trans_C"/>
</dbReference>
<dbReference type="InterPro" id="IPR038152">
    <property type="entry name" value="Carbam_trans_C_sf"/>
</dbReference>
<dbReference type="InterPro" id="IPR003696">
    <property type="entry name" value="Carbtransf_dom"/>
</dbReference>
<dbReference type="InterPro" id="IPR051338">
    <property type="entry name" value="NodU/CmcH_Carbamoyltrnsfr"/>
</dbReference>
<dbReference type="InterPro" id="IPR048155">
    <property type="entry name" value="Nodul_NodU"/>
</dbReference>
<dbReference type="NCBIfam" id="NF041651">
    <property type="entry name" value="nodul_NodU"/>
    <property type="match status" value="1"/>
</dbReference>
<dbReference type="PANTHER" id="PTHR34847">
    <property type="entry name" value="NODULATION PROTEIN U"/>
    <property type="match status" value="1"/>
</dbReference>
<dbReference type="PANTHER" id="PTHR34847:SF1">
    <property type="entry name" value="NODULATION PROTEIN U"/>
    <property type="match status" value="1"/>
</dbReference>
<dbReference type="Pfam" id="PF16861">
    <property type="entry name" value="Carbam_trans_C"/>
    <property type="match status" value="1"/>
</dbReference>
<dbReference type="Pfam" id="PF02543">
    <property type="entry name" value="Carbam_trans_N"/>
    <property type="match status" value="1"/>
</dbReference>
<comment type="function">
    <text>Involved in 6-O-carbamoylation of Nod-factors.</text>
</comment>
<comment type="similarity">
    <text evidence="1">Belongs to the NodU/CmcH family.</text>
</comment>